<name>RIBA_PSEPK</name>
<protein>
    <recommendedName>
        <fullName evidence="1">GTP cyclohydrolase-2</fullName>
        <ecNumber evidence="1">3.5.4.25</ecNumber>
    </recommendedName>
    <alternativeName>
        <fullName evidence="1">GTP cyclohydrolase II</fullName>
    </alternativeName>
</protein>
<keyword id="KW-0342">GTP-binding</keyword>
<keyword id="KW-0378">Hydrolase</keyword>
<keyword id="KW-0479">Metal-binding</keyword>
<keyword id="KW-0547">Nucleotide-binding</keyword>
<keyword id="KW-1185">Reference proteome</keyword>
<keyword id="KW-0686">Riboflavin biosynthesis</keyword>
<keyword id="KW-0862">Zinc</keyword>
<reference key="1">
    <citation type="journal article" date="2002" name="Environ. Microbiol.">
        <title>Complete genome sequence and comparative analysis of the metabolically versatile Pseudomonas putida KT2440.</title>
        <authorList>
            <person name="Nelson K.E."/>
            <person name="Weinel C."/>
            <person name="Paulsen I.T."/>
            <person name="Dodson R.J."/>
            <person name="Hilbert H."/>
            <person name="Martins dos Santos V.A.P."/>
            <person name="Fouts D.E."/>
            <person name="Gill S.R."/>
            <person name="Pop M."/>
            <person name="Holmes M."/>
            <person name="Brinkac L.M."/>
            <person name="Beanan M.J."/>
            <person name="DeBoy R.T."/>
            <person name="Daugherty S.C."/>
            <person name="Kolonay J.F."/>
            <person name="Madupu R."/>
            <person name="Nelson W.C."/>
            <person name="White O."/>
            <person name="Peterson J.D."/>
            <person name="Khouri H.M."/>
            <person name="Hance I."/>
            <person name="Chris Lee P."/>
            <person name="Holtzapple E.K."/>
            <person name="Scanlan D."/>
            <person name="Tran K."/>
            <person name="Moazzez A."/>
            <person name="Utterback T.R."/>
            <person name="Rizzo M."/>
            <person name="Lee K."/>
            <person name="Kosack D."/>
            <person name="Moestl D."/>
            <person name="Wedler H."/>
            <person name="Lauber J."/>
            <person name="Stjepandic D."/>
            <person name="Hoheisel J."/>
            <person name="Straetz M."/>
            <person name="Heim S."/>
            <person name="Kiewitz C."/>
            <person name="Eisen J.A."/>
            <person name="Timmis K.N."/>
            <person name="Duesterhoeft A."/>
            <person name="Tuemmler B."/>
            <person name="Fraser C.M."/>
        </authorList>
    </citation>
    <scope>NUCLEOTIDE SEQUENCE [LARGE SCALE GENOMIC DNA]</scope>
    <source>
        <strain>ATCC 47054 / DSM 6125 / CFBP 8728 / NCIMB 11950 / KT2440</strain>
    </source>
</reference>
<accession>Q88QH1</accession>
<proteinExistence type="inferred from homology"/>
<sequence length="205" mass="22351">MPVVFVAASKLPTPFATFTMHGFLDEATGREHVVLSLGDIADGQPVLGRLHSECLTGDALFSQRCDCGSQLEAALQAIAREGRGVLLYLRQEGRGIGLLNKIRAYELQDGGADTVEANERLGFAADQRDYAICLPMLEHLGVKSLRLMTNNPRKVKALTDMNIVVAERVPLHTGHNPHNRYYLATKAGKLGHMLGNEHQGEVPQA</sequence>
<organism>
    <name type="scientific">Pseudomonas putida (strain ATCC 47054 / DSM 6125 / CFBP 8728 / NCIMB 11950 / KT2440)</name>
    <dbReference type="NCBI Taxonomy" id="160488"/>
    <lineage>
        <taxon>Bacteria</taxon>
        <taxon>Pseudomonadati</taxon>
        <taxon>Pseudomonadota</taxon>
        <taxon>Gammaproteobacteria</taxon>
        <taxon>Pseudomonadales</taxon>
        <taxon>Pseudomonadaceae</taxon>
        <taxon>Pseudomonas</taxon>
    </lineage>
</organism>
<comment type="function">
    <text evidence="1">Catalyzes the conversion of GTP to 2,5-diamino-6-ribosylamino-4(3H)-pyrimidinone 5'-phosphate (DARP), formate and pyrophosphate.</text>
</comment>
<comment type="catalytic activity">
    <reaction evidence="1">
        <text>GTP + 4 H2O = 2,5-diamino-6-hydroxy-4-(5-phosphoribosylamino)-pyrimidine + formate + 2 phosphate + 3 H(+)</text>
        <dbReference type="Rhea" id="RHEA:23704"/>
        <dbReference type="ChEBI" id="CHEBI:15377"/>
        <dbReference type="ChEBI" id="CHEBI:15378"/>
        <dbReference type="ChEBI" id="CHEBI:15740"/>
        <dbReference type="ChEBI" id="CHEBI:37565"/>
        <dbReference type="ChEBI" id="CHEBI:43474"/>
        <dbReference type="ChEBI" id="CHEBI:58614"/>
        <dbReference type="EC" id="3.5.4.25"/>
    </reaction>
</comment>
<comment type="cofactor">
    <cofactor evidence="1">
        <name>Zn(2+)</name>
        <dbReference type="ChEBI" id="CHEBI:29105"/>
    </cofactor>
    <text evidence="1">Binds 1 zinc ion per subunit.</text>
</comment>
<comment type="pathway">
    <text evidence="1">Cofactor biosynthesis; riboflavin biosynthesis; 5-amino-6-(D-ribitylamino)uracil from GTP: step 1/4.</text>
</comment>
<comment type="similarity">
    <text evidence="1">Belongs to the GTP cyclohydrolase II family.</text>
</comment>
<dbReference type="EC" id="3.5.4.25" evidence="1"/>
<dbReference type="EMBL" id="AE015451">
    <property type="protein sequence ID" value="AAN66149.1"/>
    <property type="molecule type" value="Genomic_DNA"/>
</dbReference>
<dbReference type="RefSeq" id="NP_742685.1">
    <property type="nucleotide sequence ID" value="NC_002947.4"/>
</dbReference>
<dbReference type="RefSeq" id="WP_003255389.1">
    <property type="nucleotide sequence ID" value="NZ_CP169744.1"/>
</dbReference>
<dbReference type="SMR" id="Q88QH1"/>
<dbReference type="STRING" id="160488.PP_0522"/>
<dbReference type="PaxDb" id="160488-PP_0522"/>
<dbReference type="GeneID" id="97166048"/>
<dbReference type="KEGG" id="ppu:PP_0522"/>
<dbReference type="PATRIC" id="fig|160488.4.peg.558"/>
<dbReference type="eggNOG" id="COG0807">
    <property type="taxonomic scope" value="Bacteria"/>
</dbReference>
<dbReference type="HOGENOM" id="CLU_020273_2_1_6"/>
<dbReference type="OrthoDB" id="9793111at2"/>
<dbReference type="PhylomeDB" id="Q88QH1"/>
<dbReference type="BioCyc" id="PPUT160488:G1G01-571-MONOMER"/>
<dbReference type="UniPathway" id="UPA00275">
    <property type="reaction ID" value="UER00400"/>
</dbReference>
<dbReference type="Proteomes" id="UP000000556">
    <property type="component" value="Chromosome"/>
</dbReference>
<dbReference type="GO" id="GO:0005829">
    <property type="term" value="C:cytosol"/>
    <property type="evidence" value="ECO:0007669"/>
    <property type="project" value="TreeGrafter"/>
</dbReference>
<dbReference type="GO" id="GO:0005525">
    <property type="term" value="F:GTP binding"/>
    <property type="evidence" value="ECO:0007669"/>
    <property type="project" value="UniProtKB-KW"/>
</dbReference>
<dbReference type="GO" id="GO:0003935">
    <property type="term" value="F:GTP cyclohydrolase II activity"/>
    <property type="evidence" value="ECO:0007669"/>
    <property type="project" value="UniProtKB-UniRule"/>
</dbReference>
<dbReference type="GO" id="GO:0008270">
    <property type="term" value="F:zinc ion binding"/>
    <property type="evidence" value="ECO:0007669"/>
    <property type="project" value="UniProtKB-UniRule"/>
</dbReference>
<dbReference type="GO" id="GO:0009231">
    <property type="term" value="P:riboflavin biosynthetic process"/>
    <property type="evidence" value="ECO:0007669"/>
    <property type="project" value="UniProtKB-UniRule"/>
</dbReference>
<dbReference type="CDD" id="cd00641">
    <property type="entry name" value="GTP_cyclohydro2"/>
    <property type="match status" value="1"/>
</dbReference>
<dbReference type="FunFam" id="3.40.50.10990:FF:000002">
    <property type="entry name" value="GTP cyclohydrolase-2"/>
    <property type="match status" value="1"/>
</dbReference>
<dbReference type="Gene3D" id="3.40.50.10990">
    <property type="entry name" value="GTP cyclohydrolase II"/>
    <property type="match status" value="1"/>
</dbReference>
<dbReference type="HAMAP" id="MF_00179">
    <property type="entry name" value="RibA"/>
    <property type="match status" value="1"/>
</dbReference>
<dbReference type="InterPro" id="IPR032677">
    <property type="entry name" value="GTP_cyclohydro_II"/>
</dbReference>
<dbReference type="InterPro" id="IPR000926">
    <property type="entry name" value="RibA"/>
</dbReference>
<dbReference type="InterPro" id="IPR036144">
    <property type="entry name" value="RibA-like_sf"/>
</dbReference>
<dbReference type="NCBIfam" id="NF001591">
    <property type="entry name" value="PRK00393.1"/>
    <property type="match status" value="1"/>
</dbReference>
<dbReference type="NCBIfam" id="TIGR00505">
    <property type="entry name" value="ribA"/>
    <property type="match status" value="1"/>
</dbReference>
<dbReference type="PANTHER" id="PTHR21327:SF18">
    <property type="entry name" value="3,4-DIHYDROXY-2-BUTANONE 4-PHOSPHATE SYNTHASE"/>
    <property type="match status" value="1"/>
</dbReference>
<dbReference type="PANTHER" id="PTHR21327">
    <property type="entry name" value="GTP CYCLOHYDROLASE II-RELATED"/>
    <property type="match status" value="1"/>
</dbReference>
<dbReference type="Pfam" id="PF00925">
    <property type="entry name" value="GTP_cyclohydro2"/>
    <property type="match status" value="1"/>
</dbReference>
<dbReference type="SUPFAM" id="SSF142695">
    <property type="entry name" value="RibA-like"/>
    <property type="match status" value="1"/>
</dbReference>
<feature type="chain" id="PRO_0000151769" description="GTP cyclohydrolase-2">
    <location>
        <begin position="1"/>
        <end position="205"/>
    </location>
</feature>
<feature type="active site" description="Proton acceptor" evidence="1">
    <location>
        <position position="126"/>
    </location>
</feature>
<feature type="active site" description="Nucleophile" evidence="1">
    <location>
        <position position="128"/>
    </location>
</feature>
<feature type="binding site" evidence="1">
    <location>
        <begin position="49"/>
        <end position="53"/>
    </location>
    <ligand>
        <name>GTP</name>
        <dbReference type="ChEBI" id="CHEBI:37565"/>
    </ligand>
</feature>
<feature type="binding site" evidence="1">
    <location>
        <position position="54"/>
    </location>
    <ligand>
        <name>Zn(2+)</name>
        <dbReference type="ChEBI" id="CHEBI:29105"/>
        <note>catalytic</note>
    </ligand>
</feature>
<feature type="binding site" evidence="1">
    <location>
        <position position="65"/>
    </location>
    <ligand>
        <name>Zn(2+)</name>
        <dbReference type="ChEBI" id="CHEBI:29105"/>
        <note>catalytic</note>
    </ligand>
</feature>
<feature type="binding site" evidence="1">
    <location>
        <position position="67"/>
    </location>
    <ligand>
        <name>Zn(2+)</name>
        <dbReference type="ChEBI" id="CHEBI:29105"/>
        <note>catalytic</note>
    </ligand>
</feature>
<feature type="binding site" evidence="1">
    <location>
        <position position="70"/>
    </location>
    <ligand>
        <name>GTP</name>
        <dbReference type="ChEBI" id="CHEBI:37565"/>
    </ligand>
</feature>
<feature type="binding site" evidence="1">
    <location>
        <begin position="92"/>
        <end position="94"/>
    </location>
    <ligand>
        <name>GTP</name>
        <dbReference type="ChEBI" id="CHEBI:37565"/>
    </ligand>
</feature>
<feature type="binding site" evidence="1">
    <location>
        <position position="114"/>
    </location>
    <ligand>
        <name>GTP</name>
        <dbReference type="ChEBI" id="CHEBI:37565"/>
    </ligand>
</feature>
<feature type="binding site" evidence="1">
    <location>
        <position position="149"/>
    </location>
    <ligand>
        <name>GTP</name>
        <dbReference type="ChEBI" id="CHEBI:37565"/>
    </ligand>
</feature>
<feature type="binding site" evidence="1">
    <location>
        <position position="154"/>
    </location>
    <ligand>
        <name>GTP</name>
        <dbReference type="ChEBI" id="CHEBI:37565"/>
    </ligand>
</feature>
<evidence type="ECO:0000255" key="1">
    <source>
        <dbReference type="HAMAP-Rule" id="MF_00179"/>
    </source>
</evidence>
<gene>
    <name evidence="1" type="primary">ribA</name>
    <name type="ordered locus">PP_0522</name>
</gene>